<gene>
    <name type="ordered locus">PH1428</name>
</gene>
<proteinExistence type="inferred from homology"/>
<comment type="similarity">
    <text evidence="1">Belongs to the UPF0091 family.</text>
</comment>
<accession>O59098</accession>
<sequence>MIEYLILTCLAISVTFNMLGSIALHRFPDVYTRLHGATKCTTFGTIFATFAVVIFALARLNETRNPKYLQMALHSLIALLALLLTNPVGAHAIARASHLSGYLPKRAVVDAYLERRREKDE</sequence>
<protein>
    <recommendedName>
        <fullName>UPF0091 protein PH1428</fullName>
    </recommendedName>
</protein>
<feature type="chain" id="PRO_0000184968" description="UPF0091 protein PH1428">
    <location>
        <begin position="1"/>
        <end position="121"/>
    </location>
</feature>
<organism>
    <name type="scientific">Pyrococcus horikoshii (strain ATCC 700860 / DSM 12428 / JCM 9974 / NBRC 100139 / OT-3)</name>
    <dbReference type="NCBI Taxonomy" id="70601"/>
    <lineage>
        <taxon>Archaea</taxon>
        <taxon>Methanobacteriati</taxon>
        <taxon>Methanobacteriota</taxon>
        <taxon>Thermococci</taxon>
        <taxon>Thermococcales</taxon>
        <taxon>Thermococcaceae</taxon>
        <taxon>Pyrococcus</taxon>
    </lineage>
</organism>
<reference key="1">
    <citation type="journal article" date="1998" name="DNA Res.">
        <title>Complete sequence and gene organization of the genome of a hyper-thermophilic archaebacterium, Pyrococcus horikoshii OT3.</title>
        <authorList>
            <person name="Kawarabayasi Y."/>
            <person name="Sawada M."/>
            <person name="Horikawa H."/>
            <person name="Haikawa Y."/>
            <person name="Hino Y."/>
            <person name="Yamamoto S."/>
            <person name="Sekine M."/>
            <person name="Baba S."/>
            <person name="Kosugi H."/>
            <person name="Hosoyama A."/>
            <person name="Nagai Y."/>
            <person name="Sakai M."/>
            <person name="Ogura K."/>
            <person name="Otsuka R."/>
            <person name="Nakazawa H."/>
            <person name="Takamiya M."/>
            <person name="Ohfuku Y."/>
            <person name="Funahashi T."/>
            <person name="Tanaka T."/>
            <person name="Kudoh Y."/>
            <person name="Yamazaki J."/>
            <person name="Kushida N."/>
            <person name="Oguchi A."/>
            <person name="Aoki K."/>
            <person name="Yoshizawa T."/>
            <person name="Nakamura Y."/>
            <person name="Robb F.T."/>
            <person name="Horikoshi K."/>
            <person name="Masuchi Y."/>
            <person name="Shizuya H."/>
            <person name="Kikuchi H."/>
        </authorList>
    </citation>
    <scope>NUCLEOTIDE SEQUENCE [LARGE SCALE GENOMIC DNA]</scope>
    <source>
        <strain>ATCC 700860 / DSM 12428 / JCM 9974 / NBRC 100139 / OT-3</strain>
    </source>
</reference>
<name>Y1428_PYRHO</name>
<evidence type="ECO:0000305" key="1"/>
<dbReference type="EMBL" id="BA000001">
    <property type="protein sequence ID" value="BAA30534.1"/>
    <property type="molecule type" value="Genomic_DNA"/>
</dbReference>
<dbReference type="PIR" id="F71016">
    <property type="entry name" value="F71016"/>
</dbReference>
<dbReference type="RefSeq" id="WP_010885510.1">
    <property type="nucleotide sequence ID" value="NC_000961.1"/>
</dbReference>
<dbReference type="SMR" id="O59098"/>
<dbReference type="STRING" id="70601.gene:9378404"/>
<dbReference type="EnsemblBacteria" id="BAA30534">
    <property type="protein sequence ID" value="BAA30534"/>
    <property type="gene ID" value="BAA30534"/>
</dbReference>
<dbReference type="GeneID" id="1443748"/>
<dbReference type="KEGG" id="pho:PH1428"/>
<dbReference type="eggNOG" id="arCOG03082">
    <property type="taxonomic scope" value="Archaea"/>
</dbReference>
<dbReference type="OrthoDB" id="19138at2157"/>
<dbReference type="Proteomes" id="UP000000752">
    <property type="component" value="Chromosome"/>
</dbReference>
<dbReference type="GO" id="GO:0015385">
    <property type="term" value="F:sodium:proton antiporter activity"/>
    <property type="evidence" value="ECO:0007669"/>
    <property type="project" value="TreeGrafter"/>
</dbReference>
<dbReference type="InterPro" id="IPR005133">
    <property type="entry name" value="PhaG_MnhG_YufB"/>
</dbReference>
<dbReference type="NCBIfam" id="TIGR01300">
    <property type="entry name" value="CPA3_mnhG_phaG"/>
    <property type="match status" value="1"/>
</dbReference>
<dbReference type="NCBIfam" id="NF009312">
    <property type="entry name" value="PRK12672.1"/>
    <property type="match status" value="1"/>
</dbReference>
<dbReference type="PANTHER" id="PTHR34703">
    <property type="entry name" value="ANTIPORTER SUBUNIT MNHG2-RELATED"/>
    <property type="match status" value="1"/>
</dbReference>
<dbReference type="PANTHER" id="PTHR34703:SF1">
    <property type="entry name" value="ANTIPORTER SUBUNIT MNHG2-RELATED"/>
    <property type="match status" value="1"/>
</dbReference>
<dbReference type="Pfam" id="PF03334">
    <property type="entry name" value="PhaG_MnhG_YufB"/>
    <property type="match status" value="1"/>
</dbReference>